<protein>
    <recommendedName>
        <fullName>Lysine-specific demethylase 5B-B</fullName>
        <ecNumber evidence="2">1.14.11.67</ecNumber>
    </recommendedName>
    <alternativeName>
        <fullName>Histone demethylase JARID1B-B</fullName>
    </alternativeName>
    <alternativeName>
        <fullName>Jumonji/ARID domain-containing protein 1B-B</fullName>
    </alternativeName>
    <alternativeName>
        <fullName evidence="8">[histone H3]-trimethyl-L-lysine(4) demethylase 5B-B</fullName>
    </alternativeName>
</protein>
<name>KD5BB_DANRE</name>
<reference key="1">
    <citation type="journal article" date="2013" name="Nature">
        <title>The zebrafish reference genome sequence and its relationship to the human genome.</title>
        <authorList>
            <person name="Howe K."/>
            <person name="Clark M.D."/>
            <person name="Torroja C.F."/>
            <person name="Torrance J."/>
            <person name="Berthelot C."/>
            <person name="Muffato M."/>
            <person name="Collins J.E."/>
            <person name="Humphray S."/>
            <person name="McLaren K."/>
            <person name="Matthews L."/>
            <person name="McLaren S."/>
            <person name="Sealy I."/>
            <person name="Caccamo M."/>
            <person name="Churcher C."/>
            <person name="Scott C."/>
            <person name="Barrett J.C."/>
            <person name="Koch R."/>
            <person name="Rauch G.J."/>
            <person name="White S."/>
            <person name="Chow W."/>
            <person name="Kilian B."/>
            <person name="Quintais L.T."/>
            <person name="Guerra-Assuncao J.A."/>
            <person name="Zhou Y."/>
            <person name="Gu Y."/>
            <person name="Yen J."/>
            <person name="Vogel J.H."/>
            <person name="Eyre T."/>
            <person name="Redmond S."/>
            <person name="Banerjee R."/>
            <person name="Chi J."/>
            <person name="Fu B."/>
            <person name="Langley E."/>
            <person name="Maguire S.F."/>
            <person name="Laird G.K."/>
            <person name="Lloyd D."/>
            <person name="Kenyon E."/>
            <person name="Donaldson S."/>
            <person name="Sehra H."/>
            <person name="Almeida-King J."/>
            <person name="Loveland J."/>
            <person name="Trevanion S."/>
            <person name="Jones M."/>
            <person name="Quail M."/>
            <person name="Willey D."/>
            <person name="Hunt A."/>
            <person name="Burton J."/>
            <person name="Sims S."/>
            <person name="McLay K."/>
            <person name="Plumb B."/>
            <person name="Davis J."/>
            <person name="Clee C."/>
            <person name="Oliver K."/>
            <person name="Clark R."/>
            <person name="Riddle C."/>
            <person name="Elliot D."/>
            <person name="Threadgold G."/>
            <person name="Harden G."/>
            <person name="Ware D."/>
            <person name="Begum S."/>
            <person name="Mortimore B."/>
            <person name="Kerry G."/>
            <person name="Heath P."/>
            <person name="Phillimore B."/>
            <person name="Tracey A."/>
            <person name="Corby N."/>
            <person name="Dunn M."/>
            <person name="Johnson C."/>
            <person name="Wood J."/>
            <person name="Clark S."/>
            <person name="Pelan S."/>
            <person name="Griffiths G."/>
            <person name="Smith M."/>
            <person name="Glithero R."/>
            <person name="Howden P."/>
            <person name="Barker N."/>
            <person name="Lloyd C."/>
            <person name="Stevens C."/>
            <person name="Harley J."/>
            <person name="Holt K."/>
            <person name="Panagiotidis G."/>
            <person name="Lovell J."/>
            <person name="Beasley H."/>
            <person name="Henderson C."/>
            <person name="Gordon D."/>
            <person name="Auger K."/>
            <person name="Wright D."/>
            <person name="Collins J."/>
            <person name="Raisen C."/>
            <person name="Dyer L."/>
            <person name="Leung K."/>
            <person name="Robertson L."/>
            <person name="Ambridge K."/>
            <person name="Leongamornlert D."/>
            <person name="McGuire S."/>
            <person name="Gilderthorp R."/>
            <person name="Griffiths C."/>
            <person name="Manthravadi D."/>
            <person name="Nichol S."/>
            <person name="Barker G."/>
            <person name="Whitehead S."/>
            <person name="Kay M."/>
            <person name="Brown J."/>
            <person name="Murnane C."/>
            <person name="Gray E."/>
            <person name="Humphries M."/>
            <person name="Sycamore N."/>
            <person name="Barker D."/>
            <person name="Saunders D."/>
            <person name="Wallis J."/>
            <person name="Babbage A."/>
            <person name="Hammond S."/>
            <person name="Mashreghi-Mohammadi M."/>
            <person name="Barr L."/>
            <person name="Martin S."/>
            <person name="Wray P."/>
            <person name="Ellington A."/>
            <person name="Matthews N."/>
            <person name="Ellwood M."/>
            <person name="Woodmansey R."/>
            <person name="Clark G."/>
            <person name="Cooper J."/>
            <person name="Tromans A."/>
            <person name="Grafham D."/>
            <person name="Skuce C."/>
            <person name="Pandian R."/>
            <person name="Andrews R."/>
            <person name="Harrison E."/>
            <person name="Kimberley A."/>
            <person name="Garnett J."/>
            <person name="Fosker N."/>
            <person name="Hall R."/>
            <person name="Garner P."/>
            <person name="Kelly D."/>
            <person name="Bird C."/>
            <person name="Palmer S."/>
            <person name="Gehring I."/>
            <person name="Berger A."/>
            <person name="Dooley C.M."/>
            <person name="Ersan-Urun Z."/>
            <person name="Eser C."/>
            <person name="Geiger H."/>
            <person name="Geisler M."/>
            <person name="Karotki L."/>
            <person name="Kirn A."/>
            <person name="Konantz J."/>
            <person name="Konantz M."/>
            <person name="Oberlander M."/>
            <person name="Rudolph-Geiger S."/>
            <person name="Teucke M."/>
            <person name="Lanz C."/>
            <person name="Raddatz G."/>
            <person name="Osoegawa K."/>
            <person name="Zhu B."/>
            <person name="Rapp A."/>
            <person name="Widaa S."/>
            <person name="Langford C."/>
            <person name="Yang F."/>
            <person name="Schuster S.C."/>
            <person name="Carter N.P."/>
            <person name="Harrow J."/>
            <person name="Ning Z."/>
            <person name="Herrero J."/>
            <person name="Searle S.M."/>
            <person name="Enright A."/>
            <person name="Geisler R."/>
            <person name="Plasterk R.H."/>
            <person name="Lee C."/>
            <person name="Westerfield M."/>
            <person name="de Jong P.J."/>
            <person name="Zon L.I."/>
            <person name="Postlethwait J.H."/>
            <person name="Nusslein-Volhard C."/>
            <person name="Hubbard T.J."/>
            <person name="Roest Crollius H."/>
            <person name="Rogers J."/>
            <person name="Stemple D.L."/>
        </authorList>
    </citation>
    <scope>NUCLEOTIDE SEQUENCE [LARGE SCALE GENOMIC DNA]</scope>
    <source>
        <strain>Tuebingen</strain>
    </source>
</reference>
<reference key="2">
    <citation type="submission" date="2004-06" db="EMBL/GenBank/DDBJ databases">
        <authorList>
            <consortium name="NIH - Zebrafish Gene Collection (ZGC) project"/>
        </authorList>
    </citation>
    <scope>NUCLEOTIDE SEQUENCE [LARGE SCALE MRNA] (ISOFORM 1)</scope>
    <source>
        <tissue>Kidney</tissue>
    </source>
</reference>
<organism>
    <name type="scientific">Danio rerio</name>
    <name type="common">Zebrafish</name>
    <name type="synonym">Brachydanio rerio</name>
    <dbReference type="NCBI Taxonomy" id="7955"/>
    <lineage>
        <taxon>Eukaryota</taxon>
        <taxon>Metazoa</taxon>
        <taxon>Chordata</taxon>
        <taxon>Craniata</taxon>
        <taxon>Vertebrata</taxon>
        <taxon>Euteleostomi</taxon>
        <taxon>Actinopterygii</taxon>
        <taxon>Neopterygii</taxon>
        <taxon>Teleostei</taxon>
        <taxon>Ostariophysi</taxon>
        <taxon>Cypriniformes</taxon>
        <taxon>Danionidae</taxon>
        <taxon>Danioninae</taxon>
        <taxon>Danio</taxon>
    </lineage>
</organism>
<gene>
    <name type="primary">kdm5bb</name>
    <name type="synonym">jarid1b</name>
    <name type="synonym">jarid1bb</name>
    <name type="ORF">si:dkey-193l3.2</name>
    <name type="ORF">zgc:85741</name>
</gene>
<proteinExistence type="evidence at transcript level"/>
<feature type="chain" id="PRO_0000292415" description="Lysine-specific demethylase 5B-B">
    <location>
        <begin position="1"/>
        <end position="1503"/>
    </location>
</feature>
<feature type="domain" description="JmjN" evidence="5">
    <location>
        <begin position="15"/>
        <end position="56"/>
    </location>
</feature>
<feature type="domain" description="ARID" evidence="4">
    <location>
        <begin position="80"/>
        <end position="170"/>
    </location>
</feature>
<feature type="domain" description="JmjC" evidence="6">
    <location>
        <begin position="439"/>
        <end position="605"/>
    </location>
</feature>
<feature type="zinc finger region" description="PHD-type 1" evidence="3">
    <location>
        <begin position="295"/>
        <end position="345"/>
    </location>
</feature>
<feature type="zinc finger region" description="PHD-type 2" evidence="3">
    <location>
        <begin position="1168"/>
        <end position="1216"/>
    </location>
</feature>
<feature type="zinc finger region" description="PHD-type 3" evidence="3">
    <location>
        <begin position="1444"/>
        <end position="1497"/>
    </location>
</feature>
<feature type="region of interest" description="Disordered" evidence="7">
    <location>
        <begin position="202"/>
        <end position="223"/>
    </location>
</feature>
<feature type="region of interest" description="Disordered" evidence="7">
    <location>
        <begin position="268"/>
        <end position="287"/>
    </location>
</feature>
<feature type="region of interest" description="Disordered" evidence="7">
    <location>
        <begin position="1362"/>
        <end position="1381"/>
    </location>
</feature>
<feature type="region of interest" description="Disordered" evidence="7">
    <location>
        <begin position="1403"/>
        <end position="1442"/>
    </location>
</feature>
<feature type="compositionally biased region" description="Polar residues" evidence="7">
    <location>
        <begin position="202"/>
        <end position="211"/>
    </location>
</feature>
<feature type="compositionally biased region" description="Basic and acidic residues" evidence="7">
    <location>
        <begin position="268"/>
        <end position="278"/>
    </location>
</feature>
<feature type="binding site" evidence="6">
    <location>
        <position position="485"/>
    </location>
    <ligand>
        <name>Fe cation</name>
        <dbReference type="ChEBI" id="CHEBI:24875"/>
        <note>catalytic</note>
    </ligand>
</feature>
<feature type="binding site" evidence="6">
    <location>
        <position position="488"/>
    </location>
    <ligand>
        <name>Fe cation</name>
        <dbReference type="ChEBI" id="CHEBI:24875"/>
        <note>catalytic</note>
    </ligand>
</feature>
<feature type="binding site" evidence="6">
    <location>
        <position position="573"/>
    </location>
    <ligand>
        <name>Fe cation</name>
        <dbReference type="ChEBI" id="CHEBI:24875"/>
        <note>catalytic</note>
    </ligand>
</feature>
<feature type="splice variant" id="VSP_035555" description="In isoform 2." evidence="8">
    <original>L</original>
    <variation>LAPEFAVKLTGFGEPPVLEE</variation>
    <location>
        <position position="175"/>
    </location>
</feature>
<feature type="sequence conflict" description="In Ref. 2; AAH71280." evidence="8" ref="2">
    <original>Y</original>
    <variation>H</variation>
    <location>
        <position position="1284"/>
    </location>
</feature>
<feature type="sequence conflict" description="In Ref. 2; AAH71280." evidence="8" ref="2">
    <original>L</original>
    <variation>Q</variation>
    <location>
        <position position="1293"/>
    </location>
</feature>
<comment type="function">
    <text evidence="1">Histone demethylase that demethylates 'Lys-4' of histone H3, thereby playing a central role in histone code. Does not demethylate histone H3 'Lys-9' or H3 'Lys-27'. Demethylates trimethylated, dimethylated and monomethylated H3 'Lys-4'. Acts as a transcriptional corepressor (By similarity).</text>
</comment>
<comment type="catalytic activity">
    <reaction evidence="2">
        <text>N(6),N(6),N(6)-trimethyl-L-lysyl(4)-[histone H3] + 3 2-oxoglutarate + 3 O2 = L-lysyl(4)-[histone H3] + 3 formaldehyde + 3 succinate + 3 CO2</text>
        <dbReference type="Rhea" id="RHEA:60208"/>
        <dbReference type="Rhea" id="RHEA-COMP:15537"/>
        <dbReference type="Rhea" id="RHEA-COMP:15547"/>
        <dbReference type="ChEBI" id="CHEBI:15379"/>
        <dbReference type="ChEBI" id="CHEBI:16526"/>
        <dbReference type="ChEBI" id="CHEBI:16810"/>
        <dbReference type="ChEBI" id="CHEBI:16842"/>
        <dbReference type="ChEBI" id="CHEBI:29969"/>
        <dbReference type="ChEBI" id="CHEBI:30031"/>
        <dbReference type="ChEBI" id="CHEBI:61961"/>
        <dbReference type="EC" id="1.14.11.67"/>
    </reaction>
</comment>
<comment type="cofactor">
    <cofactor evidence="1">
        <name>Fe(2+)</name>
        <dbReference type="ChEBI" id="CHEBI:29033"/>
    </cofactor>
    <text evidence="1">Binds 1 Fe(2+) ion per subunit.</text>
</comment>
<comment type="subcellular location">
    <subcellularLocation>
        <location evidence="4 5">Nucleus</location>
    </subcellularLocation>
</comment>
<comment type="alternative products">
    <event type="alternative splicing"/>
    <isoform>
        <id>Q6IQX0-1</id>
        <name>1</name>
        <sequence type="displayed"/>
    </isoform>
    <isoform>
        <id>Q6IQX0-2</id>
        <name>2</name>
        <sequence type="described" ref="VSP_035555"/>
    </isoform>
</comment>
<comment type="domain">
    <text evidence="1">Both the JmjC domain and the JmjN domain are required for enzymatic activity.</text>
</comment>
<comment type="domain">
    <text evidence="1">The 2 first PHD-type zinc finger domains are required for transcription repression activity.</text>
</comment>
<comment type="similarity">
    <text evidence="8">Belongs to the JARID1 histone demethylase family.</text>
</comment>
<comment type="sequence caution" evidence="8">
    <conflict type="erroneous gene model prediction">
        <sequence resource="EMBL-CDS" id="CAQ14256"/>
    </conflict>
</comment>
<keyword id="KW-0025">Alternative splicing</keyword>
<keyword id="KW-0156">Chromatin regulator</keyword>
<keyword id="KW-0223">Dioxygenase</keyword>
<keyword id="KW-0408">Iron</keyword>
<keyword id="KW-0479">Metal-binding</keyword>
<keyword id="KW-0539">Nucleus</keyword>
<keyword id="KW-0560">Oxidoreductase</keyword>
<keyword id="KW-1185">Reference proteome</keyword>
<keyword id="KW-0677">Repeat</keyword>
<keyword id="KW-0804">Transcription</keyword>
<keyword id="KW-0805">Transcription regulation</keyword>
<keyword id="KW-0862">Zinc</keyword>
<keyword id="KW-0863">Zinc-finger</keyword>
<dbReference type="EC" id="1.14.11.67" evidence="2"/>
<dbReference type="EMBL" id="BX322655">
    <property type="protein sequence ID" value="CAQ14256.1"/>
    <property type="status" value="ALT_SEQ"/>
    <property type="molecule type" value="Genomic_DNA"/>
</dbReference>
<dbReference type="EMBL" id="BX322655">
    <property type="protein sequence ID" value="CAQ14257.1"/>
    <property type="molecule type" value="Genomic_DNA"/>
</dbReference>
<dbReference type="EMBL" id="BX664742">
    <property type="protein sequence ID" value="CAQ14257.1"/>
    <property type="status" value="JOINED"/>
    <property type="molecule type" value="Genomic_DNA"/>
</dbReference>
<dbReference type="EMBL" id="BX664742">
    <property type="protein sequence ID" value="CAQ13548.1"/>
    <property type="molecule type" value="Genomic_DNA"/>
</dbReference>
<dbReference type="EMBL" id="BX322655">
    <property type="protein sequence ID" value="CAQ13548.1"/>
    <property type="status" value="JOINED"/>
    <property type="molecule type" value="Genomic_DNA"/>
</dbReference>
<dbReference type="EMBL" id="BC071280">
    <property type="protein sequence ID" value="AAH71280.1"/>
    <property type="molecule type" value="mRNA"/>
</dbReference>
<dbReference type="SMR" id="Q6IQX0"/>
<dbReference type="FunCoup" id="Q6IQX0">
    <property type="interactions" value="2809"/>
</dbReference>
<dbReference type="STRING" id="7955.ENSDARP00000023794"/>
<dbReference type="PaxDb" id="7955-ENSDARP00000023794"/>
<dbReference type="AGR" id="ZFIN:ZDB-GENE-030424-1"/>
<dbReference type="ZFIN" id="ZDB-GENE-030424-1">
    <property type="gene designation" value="kdm5bb"/>
</dbReference>
<dbReference type="eggNOG" id="KOG1246">
    <property type="taxonomic scope" value="Eukaryota"/>
</dbReference>
<dbReference type="InParanoid" id="Q6IQX0"/>
<dbReference type="PhylomeDB" id="Q6IQX0"/>
<dbReference type="BRENDA" id="1.14.11.67">
    <property type="organism ID" value="928"/>
</dbReference>
<dbReference type="Reactome" id="R-DRE-8866911">
    <property type="pathway name" value="TFAP2 (AP-2) family regulates transcription of cell cycle factors"/>
</dbReference>
<dbReference type="PRO" id="PR:Q6IQX0"/>
<dbReference type="Proteomes" id="UP000000437">
    <property type="component" value="Unplaced"/>
</dbReference>
<dbReference type="GO" id="GO:0000785">
    <property type="term" value="C:chromatin"/>
    <property type="evidence" value="ECO:0000318"/>
    <property type="project" value="GO_Central"/>
</dbReference>
<dbReference type="GO" id="GO:0005634">
    <property type="term" value="C:nucleus"/>
    <property type="evidence" value="ECO:0000318"/>
    <property type="project" value="GO_Central"/>
</dbReference>
<dbReference type="GO" id="GO:0003677">
    <property type="term" value="F:DNA binding"/>
    <property type="evidence" value="ECO:0007669"/>
    <property type="project" value="InterPro"/>
</dbReference>
<dbReference type="GO" id="GO:0034647">
    <property type="term" value="F:histone H3K4me/H3K4me2/H3K4me3 demethylase activity"/>
    <property type="evidence" value="ECO:0000250"/>
    <property type="project" value="UniProtKB"/>
</dbReference>
<dbReference type="GO" id="GO:0008270">
    <property type="term" value="F:zinc ion binding"/>
    <property type="evidence" value="ECO:0007669"/>
    <property type="project" value="UniProtKB-KW"/>
</dbReference>
<dbReference type="GO" id="GO:0006338">
    <property type="term" value="P:chromatin remodeling"/>
    <property type="evidence" value="ECO:0000318"/>
    <property type="project" value="GO_Central"/>
</dbReference>
<dbReference type="GO" id="GO:0006355">
    <property type="term" value="P:regulation of DNA-templated transcription"/>
    <property type="evidence" value="ECO:0000318"/>
    <property type="project" value="GO_Central"/>
</dbReference>
<dbReference type="CDD" id="cd16874">
    <property type="entry name" value="ARID_KDM5B"/>
    <property type="match status" value="1"/>
</dbReference>
<dbReference type="CDD" id="cd15603">
    <property type="entry name" value="PHD1_KDM5B"/>
    <property type="match status" value="1"/>
</dbReference>
<dbReference type="CDD" id="cd15607">
    <property type="entry name" value="PHD2_KDM5B"/>
    <property type="match status" value="1"/>
</dbReference>
<dbReference type="CDD" id="cd15687">
    <property type="entry name" value="PHD3_KDM5B"/>
    <property type="match status" value="1"/>
</dbReference>
<dbReference type="FunFam" id="3.30.40.10:FF:000023">
    <property type="entry name" value="Lysine (K)-specific demethylase 5A"/>
    <property type="match status" value="1"/>
</dbReference>
<dbReference type="FunFam" id="2.60.120.650:FF:000020">
    <property type="entry name" value="Lysine (K)-specific demethylase 5Bb"/>
    <property type="match status" value="1"/>
</dbReference>
<dbReference type="FunFam" id="3.30.40.10:FF:000709">
    <property type="entry name" value="Lysine-specific demethylase 5B-B"/>
    <property type="match status" value="1"/>
</dbReference>
<dbReference type="FunFam" id="2.60.120.650:FF:000035">
    <property type="entry name" value="PHD transcription factor Rum1"/>
    <property type="match status" value="1"/>
</dbReference>
<dbReference type="FunFam" id="1.10.150.60:FF:000001">
    <property type="entry name" value="Putative lysine-specific demethylase 5b"/>
    <property type="match status" value="1"/>
</dbReference>
<dbReference type="Gene3D" id="1.10.150.60">
    <property type="entry name" value="ARID DNA-binding domain"/>
    <property type="match status" value="1"/>
</dbReference>
<dbReference type="Gene3D" id="2.60.120.650">
    <property type="entry name" value="Cupin"/>
    <property type="match status" value="1"/>
</dbReference>
<dbReference type="Gene3D" id="3.30.40.10">
    <property type="entry name" value="Zinc/RING finger domain, C3HC4 (zinc finger)"/>
    <property type="match status" value="3"/>
</dbReference>
<dbReference type="InterPro" id="IPR001606">
    <property type="entry name" value="ARID_dom"/>
</dbReference>
<dbReference type="InterPro" id="IPR036431">
    <property type="entry name" value="ARID_dom_sf"/>
</dbReference>
<dbReference type="InterPro" id="IPR003347">
    <property type="entry name" value="JmjC_dom"/>
</dbReference>
<dbReference type="InterPro" id="IPR003349">
    <property type="entry name" value="JmjN"/>
</dbReference>
<dbReference type="InterPro" id="IPR048615">
    <property type="entry name" value="KDM5_C-hel"/>
</dbReference>
<dbReference type="InterPro" id="IPR047981">
    <property type="entry name" value="KDM5B_ARID"/>
</dbReference>
<dbReference type="InterPro" id="IPR047978">
    <property type="entry name" value="KDM5B_PHD1"/>
</dbReference>
<dbReference type="InterPro" id="IPR047979">
    <property type="entry name" value="KDM5B_PHD3"/>
</dbReference>
<dbReference type="InterPro" id="IPR013637">
    <property type="entry name" value="Lys_sp_deMease-like_dom"/>
</dbReference>
<dbReference type="InterPro" id="IPR019786">
    <property type="entry name" value="Zinc_finger_PHD-type_CS"/>
</dbReference>
<dbReference type="InterPro" id="IPR004198">
    <property type="entry name" value="Znf_C5HC2"/>
</dbReference>
<dbReference type="InterPro" id="IPR011011">
    <property type="entry name" value="Znf_FYVE_PHD"/>
</dbReference>
<dbReference type="InterPro" id="IPR001965">
    <property type="entry name" value="Znf_PHD"/>
</dbReference>
<dbReference type="InterPro" id="IPR019787">
    <property type="entry name" value="Znf_PHD-finger"/>
</dbReference>
<dbReference type="InterPro" id="IPR013083">
    <property type="entry name" value="Znf_RING/FYVE/PHD"/>
</dbReference>
<dbReference type="PANTHER" id="PTHR10694">
    <property type="entry name" value="LYSINE-SPECIFIC DEMETHYLASE"/>
    <property type="match status" value="1"/>
</dbReference>
<dbReference type="PANTHER" id="PTHR10694:SF3">
    <property type="entry name" value="LYSINE-SPECIFIC DEMETHYLASE 5B"/>
    <property type="match status" value="1"/>
</dbReference>
<dbReference type="Pfam" id="PF01388">
    <property type="entry name" value="ARID"/>
    <property type="match status" value="1"/>
</dbReference>
<dbReference type="Pfam" id="PF02373">
    <property type="entry name" value="JmjC"/>
    <property type="match status" value="1"/>
</dbReference>
<dbReference type="Pfam" id="PF02375">
    <property type="entry name" value="JmjN"/>
    <property type="match status" value="1"/>
</dbReference>
<dbReference type="Pfam" id="PF21323">
    <property type="entry name" value="KDM5_C-hel"/>
    <property type="match status" value="1"/>
</dbReference>
<dbReference type="Pfam" id="PF00628">
    <property type="entry name" value="PHD"/>
    <property type="match status" value="2"/>
</dbReference>
<dbReference type="Pfam" id="PF08429">
    <property type="entry name" value="PLU-1"/>
    <property type="match status" value="1"/>
</dbReference>
<dbReference type="Pfam" id="PF02928">
    <property type="entry name" value="zf-C5HC2"/>
    <property type="match status" value="1"/>
</dbReference>
<dbReference type="SMART" id="SM01014">
    <property type="entry name" value="ARID"/>
    <property type="match status" value="1"/>
</dbReference>
<dbReference type="SMART" id="SM00501">
    <property type="entry name" value="BRIGHT"/>
    <property type="match status" value="1"/>
</dbReference>
<dbReference type="SMART" id="SM00558">
    <property type="entry name" value="JmjC"/>
    <property type="match status" value="1"/>
</dbReference>
<dbReference type="SMART" id="SM00545">
    <property type="entry name" value="JmjN"/>
    <property type="match status" value="1"/>
</dbReference>
<dbReference type="SMART" id="SM00249">
    <property type="entry name" value="PHD"/>
    <property type="match status" value="3"/>
</dbReference>
<dbReference type="SUPFAM" id="SSF46774">
    <property type="entry name" value="ARID-like"/>
    <property type="match status" value="1"/>
</dbReference>
<dbReference type="SUPFAM" id="SSF51197">
    <property type="entry name" value="Clavaminate synthase-like"/>
    <property type="match status" value="1"/>
</dbReference>
<dbReference type="SUPFAM" id="SSF57903">
    <property type="entry name" value="FYVE/PHD zinc finger"/>
    <property type="match status" value="3"/>
</dbReference>
<dbReference type="PROSITE" id="PS51011">
    <property type="entry name" value="ARID"/>
    <property type="match status" value="1"/>
</dbReference>
<dbReference type="PROSITE" id="PS51184">
    <property type="entry name" value="JMJC"/>
    <property type="match status" value="1"/>
</dbReference>
<dbReference type="PROSITE" id="PS51183">
    <property type="entry name" value="JMJN"/>
    <property type="match status" value="1"/>
</dbReference>
<dbReference type="PROSITE" id="PS01359">
    <property type="entry name" value="ZF_PHD_1"/>
    <property type="match status" value="2"/>
</dbReference>
<dbReference type="PROSITE" id="PS50016">
    <property type="entry name" value="ZF_PHD_2"/>
    <property type="match status" value="3"/>
</dbReference>
<accession>Q6IQX0</accession>
<accession>B0S5X8</accession>
<accession>B0S5X9</accession>
<evidence type="ECO:0000250" key="1"/>
<evidence type="ECO:0000250" key="2">
    <source>
        <dbReference type="UniProtKB" id="Q9BY66"/>
    </source>
</evidence>
<evidence type="ECO:0000255" key="3">
    <source>
        <dbReference type="PROSITE-ProRule" id="PRU00146"/>
    </source>
</evidence>
<evidence type="ECO:0000255" key="4">
    <source>
        <dbReference type="PROSITE-ProRule" id="PRU00355"/>
    </source>
</evidence>
<evidence type="ECO:0000255" key="5">
    <source>
        <dbReference type="PROSITE-ProRule" id="PRU00537"/>
    </source>
</evidence>
<evidence type="ECO:0000255" key="6">
    <source>
        <dbReference type="PROSITE-ProRule" id="PRU00538"/>
    </source>
</evidence>
<evidence type="ECO:0000256" key="7">
    <source>
        <dbReference type="SAM" id="MobiDB-lite"/>
    </source>
</evidence>
<evidence type="ECO:0000305" key="8"/>
<sequence length="1503" mass="171098">MTQQGPAEFTPPPECPVFEPSWEEFKDPFAFINKIRPIAEKTGICKVRPPPDWQPPFACDVDRLHFTPRIQRLNELEAQTRVKLNFLDQIAKFWDLQGCTLKIPHVERKILDLYQLNKLVADEGGFDLVCRERRWTKIAMTMGFAPGKAVGSHLRAHYERILYPYNLFQSGTNLLCLQKPGDEVNDIDKEYKPHDLLQRQNVPLQPSNTSAPARRAKRMKTESGCIKSEEGEGVENKPNLRRRMGSFVVKTEPKKEIPIQVKEEPVEIKELNPEPEKSKPKKKNIPPPPVSMVDLYVCLVCGKGNDEDRLLLCDGCDDSYHTFCLIPPLTDVPKGDWRCPKCLTQECCKPQEAFGFEQAHRDYTLKAFGEMADSFKSDYFNMPVHMVPTELVEKEFWRLVGTIQEDVTVEYGADIASKEFGSGFPIKGGRFKIAPHDEKYLQCGWNLNNMAMMTPSVLTHVTADICGMTLPWLYVGMCFSSFCWHIEDHWSYSINYLHWGEPKTWYGAPGFAAEQLEAVMKKLAPELFDSQPDLLHQLVTIMNPNTLMAHGVPIYRTNQCAGEFVITFPRSYHSGFNQGFNFAEAVNFCTVDWMPLGRQCVDHYRQLHRYCVFSHDEMVCNMAMKADCLDVVLASAVQKDMQLMIKEERELREKVRKMGVAQCELFQYDLLADDERQCVKCRTTCYLSALTCPCRPGVQVCLYHTHDLCSCPISNYTLNYRFTLDDLYPMMNAVRQRAEYYDDWASRVTEVMEAKLDKKRNVTVFRTLLEESNEQSFPENDLLRQLRLVTQDAEKCSSVAQQLLNGKRQTRYRTGKAKSPNQLTVEEMRSFVRQLYNLPCSLTQAPLLKELLNSIEDFQQHSEKLLSDEVSADAVSEIESLLEEGSQFDVFLPELPLLRERLEQARWLTGVHQAEDPVANPCGLSLESMRRLIDRGVGLTPHPSIERMMARLQELLTVSEELEENAQALLKARPPESLETLCSMLTQVEGVPAYLPNCLLLQDTVNRAKEWLQEAESLQVGGQVPVFSSLSDMVLRAHSIPVRLEPLDQLEVQVSEVQSWKETAAKTFLIKSSPFTLLEVLCPRWEMGSSLKKKKMRKMKGDCVSSGKKKFVKLDSMSDVERALSDSKDSASAMFTLAEVRLKELESLCSLRASNESKLLPTADCASLKVCVCQKPAMGAMLQCELCRDAFHSVCVRGPSDPLDPEAWLCPLCLRSTKPPLDKIRSLLSSLQRIRVRLPEGDALRYMIERSVSWQRRVREVIDSYGLSSTSQDGRGASPSQNLYRSTGHSRKLQLCGSPSRCQDWAVSGQEQTVFYTEQRCIPLQGLSPELEELMVEGLVLQVSLPETQQLYRLLLSGPPTTNTSHAEHKSYLTPPQTETDAITSAEKKAKRRMNRDEVDIRERGTKLKSKKQRMMGVEKRRERKAASVSASDMSQSEDSEEDMTLCPAESCLQPEGEEVDWVQCDCCNRWFHMICVGVSAELAAEEDYMCVSCSTSHMDRRK</sequence>